<accession>P0DA01</accession>
<accession>Q79YM8</accession>
<accession>Q8K8T0</accession>
<name>VATD_STRPQ</name>
<dbReference type="EMBL" id="BA000034">
    <property type="protein sequence ID" value="BAC63219.1"/>
    <property type="molecule type" value="Genomic_DNA"/>
</dbReference>
<dbReference type="RefSeq" id="WP_002993843.1">
    <property type="nucleotide sequence ID" value="NC_004606.1"/>
</dbReference>
<dbReference type="SMR" id="P0DA01"/>
<dbReference type="KEGG" id="sps:SPs0124"/>
<dbReference type="HOGENOM" id="CLU_069688_2_1_9"/>
<dbReference type="GO" id="GO:0005524">
    <property type="term" value="F:ATP binding"/>
    <property type="evidence" value="ECO:0007669"/>
    <property type="project" value="UniProtKB-UniRule"/>
</dbReference>
<dbReference type="GO" id="GO:0046933">
    <property type="term" value="F:proton-transporting ATP synthase activity, rotational mechanism"/>
    <property type="evidence" value="ECO:0007669"/>
    <property type="project" value="UniProtKB-UniRule"/>
</dbReference>
<dbReference type="GO" id="GO:0046961">
    <property type="term" value="F:proton-transporting ATPase activity, rotational mechanism"/>
    <property type="evidence" value="ECO:0007669"/>
    <property type="project" value="InterPro"/>
</dbReference>
<dbReference type="GO" id="GO:0042777">
    <property type="term" value="P:proton motive force-driven plasma membrane ATP synthesis"/>
    <property type="evidence" value="ECO:0007669"/>
    <property type="project" value="UniProtKB-UniRule"/>
</dbReference>
<dbReference type="FunFam" id="1.10.287.3240:FF:000007">
    <property type="entry name" value="V-type ATP synthase subunit D"/>
    <property type="match status" value="1"/>
</dbReference>
<dbReference type="Gene3D" id="1.10.287.3240">
    <property type="match status" value="1"/>
</dbReference>
<dbReference type="HAMAP" id="MF_00271">
    <property type="entry name" value="ATP_synth_D_arch"/>
    <property type="match status" value="1"/>
</dbReference>
<dbReference type="InterPro" id="IPR002699">
    <property type="entry name" value="V_ATPase_D"/>
</dbReference>
<dbReference type="NCBIfam" id="NF001546">
    <property type="entry name" value="PRK00373.1-5"/>
    <property type="match status" value="1"/>
</dbReference>
<dbReference type="NCBIfam" id="TIGR00309">
    <property type="entry name" value="V_ATPase_subD"/>
    <property type="match status" value="1"/>
</dbReference>
<dbReference type="PANTHER" id="PTHR11671">
    <property type="entry name" value="V-TYPE ATP SYNTHASE SUBUNIT D"/>
    <property type="match status" value="1"/>
</dbReference>
<dbReference type="Pfam" id="PF01813">
    <property type="entry name" value="ATP-synt_D"/>
    <property type="match status" value="1"/>
</dbReference>
<gene>
    <name evidence="1" type="primary">atpD</name>
    <name type="ordered locus">SPs0124</name>
</gene>
<proteinExistence type="inferred from homology"/>
<comment type="function">
    <text evidence="1">Produces ATP from ADP in the presence of a proton gradient across the membrane.</text>
</comment>
<comment type="similarity">
    <text evidence="1">Belongs to the V-ATPase D subunit family.</text>
</comment>
<protein>
    <recommendedName>
        <fullName evidence="1">V-type ATP synthase subunit D</fullName>
    </recommendedName>
    <alternativeName>
        <fullName evidence="1">V-ATPase subunit D</fullName>
    </alternativeName>
</protein>
<feature type="chain" id="PRO_0000411292" description="V-type ATP synthase subunit D">
    <location>
        <begin position="1"/>
        <end position="208"/>
    </location>
</feature>
<evidence type="ECO:0000255" key="1">
    <source>
        <dbReference type="HAMAP-Rule" id="MF_00271"/>
    </source>
</evidence>
<organism>
    <name type="scientific">Streptococcus pyogenes serotype M3 (strain SSI-1)</name>
    <dbReference type="NCBI Taxonomy" id="193567"/>
    <lineage>
        <taxon>Bacteria</taxon>
        <taxon>Bacillati</taxon>
        <taxon>Bacillota</taxon>
        <taxon>Bacilli</taxon>
        <taxon>Lactobacillales</taxon>
        <taxon>Streptococcaceae</taxon>
        <taxon>Streptococcus</taxon>
    </lineage>
</organism>
<keyword id="KW-0066">ATP synthesis</keyword>
<keyword id="KW-0375">Hydrogen ion transport</keyword>
<keyword id="KW-0406">Ion transport</keyword>
<keyword id="KW-0813">Transport</keyword>
<reference key="1">
    <citation type="journal article" date="2003" name="Genome Res.">
        <title>Genome sequence of an M3 strain of Streptococcus pyogenes reveals a large-scale genomic rearrangement in invasive strains and new insights into phage evolution.</title>
        <authorList>
            <person name="Nakagawa I."/>
            <person name="Kurokawa K."/>
            <person name="Yamashita A."/>
            <person name="Nakata M."/>
            <person name="Tomiyasu Y."/>
            <person name="Okahashi N."/>
            <person name="Kawabata S."/>
            <person name="Yamazaki K."/>
            <person name="Shiba T."/>
            <person name="Yasunaga T."/>
            <person name="Hayashi H."/>
            <person name="Hattori M."/>
            <person name="Hamada S."/>
        </authorList>
    </citation>
    <scope>NUCLEOTIDE SEQUENCE [LARGE SCALE GENOMIC DNA]</scope>
    <source>
        <strain>SSI-1</strain>
    </source>
</reference>
<sequence length="208" mass="24332">MARLNVKPTRMELSNLKNRLKTATRGHKLLKDKRDELMRRFVDLIRENNELRQTIEKELAANMKEFVLAKASENSLMVEELFAVPVHEVTLWIDIENIMSVNVPKFHVQSNTAREQEQGEFAYSYLSSNSEMDNTIQKTKELLEKLLRLAEVEKTCQLMADDIEKTRRRVNGLEYAIIPQLEETIHYIELKLEEAERASLVRIMKITS</sequence>